<proteinExistence type="inferred from homology"/>
<name>PSB30_GLOVI</name>
<comment type="function">
    <text evidence="1">A core subunit of photosystem II (PSII), probably helps stabilize the reaction center.</text>
</comment>
<comment type="subunit">
    <text evidence="2">PSII is composed of 1 copy each of membrane proteins PsbA, PsbB, PsbC, PsbD, PsbE, PsbF, PsbH, PsbI, PsbJ, PsbK, PsbL, PsbM, PsbT, PsbX, Psb30/Ycf12, peripheral proteins PsbO, CyanoQ (PsbQ), PsbU, PsbV and a large number of cofactors. It forms dimeric complexes.</text>
</comment>
<comment type="subcellular location">
    <subcellularLocation>
        <location evidence="1">Cell inner membrane</location>
        <topology evidence="1">Single-pass membrane protein</topology>
    </subcellularLocation>
</comment>
<comment type="similarity">
    <text evidence="1">Belongs to the Psb30/Ycf12 family.</text>
</comment>
<evidence type="ECO:0000255" key="1">
    <source>
        <dbReference type="HAMAP-Rule" id="MF_01329"/>
    </source>
</evidence>
<evidence type="ECO:0000305" key="2">
    <source>
    </source>
</evidence>
<keyword id="KW-0997">Cell inner membrane</keyword>
<keyword id="KW-1003">Cell membrane</keyword>
<keyword id="KW-0472">Membrane</keyword>
<keyword id="KW-0602">Photosynthesis</keyword>
<keyword id="KW-0604">Photosystem II</keyword>
<keyword id="KW-1185">Reference proteome</keyword>
<keyword id="KW-0812">Transmembrane</keyword>
<keyword id="KW-1133">Transmembrane helix</keyword>
<organism>
    <name type="scientific">Gloeobacter violaceus (strain ATCC 29082 / PCC 7421)</name>
    <dbReference type="NCBI Taxonomy" id="251221"/>
    <lineage>
        <taxon>Bacteria</taxon>
        <taxon>Bacillati</taxon>
        <taxon>Cyanobacteriota</taxon>
        <taxon>Cyanophyceae</taxon>
        <taxon>Gloeobacterales</taxon>
        <taxon>Gloeobacteraceae</taxon>
        <taxon>Gloeobacter</taxon>
    </lineage>
</organism>
<gene>
    <name evidence="1" type="primary">psb30</name>
    <name evidence="1" type="synonym">ycf12</name>
    <name type="ordered locus">gll2754.1</name>
</gene>
<reference key="1">
    <citation type="journal article" date="2003" name="DNA Res.">
        <title>Complete genome structure of Gloeobacter violaceus PCC 7421, a cyanobacterium that lacks thylakoids.</title>
        <authorList>
            <person name="Nakamura Y."/>
            <person name="Kaneko T."/>
            <person name="Sato S."/>
            <person name="Mimuro M."/>
            <person name="Miyashita H."/>
            <person name="Tsuchiya T."/>
            <person name="Sasamoto S."/>
            <person name="Watanabe A."/>
            <person name="Kawashima K."/>
            <person name="Kishida Y."/>
            <person name="Kiyokawa C."/>
            <person name="Kohara M."/>
            <person name="Matsumoto M."/>
            <person name="Matsuno A."/>
            <person name="Nakazaki N."/>
            <person name="Shimpo S."/>
            <person name="Takeuchi C."/>
            <person name="Yamada M."/>
            <person name="Tabata S."/>
        </authorList>
    </citation>
    <scope>NUCLEOTIDE SEQUENCE [LARGE SCALE GENOMIC DNA]</scope>
    <source>
        <strain>ATCC 29082 / PCC 7421</strain>
    </source>
</reference>
<protein>
    <recommendedName>
        <fullName evidence="1">Photosystem II reaction center protein Psb30</fullName>
    </recommendedName>
    <alternativeName>
        <fullName evidence="1">Photosystem II reaction center protein Ycf12</fullName>
    </alternativeName>
</protein>
<feature type="chain" id="PRO_0000059042" description="Photosystem II reaction center protein Psb30">
    <location>
        <begin position="1"/>
        <end position="37"/>
    </location>
</feature>
<feature type="transmembrane region" description="Helical" evidence="1">
    <location>
        <begin position="10"/>
        <end position="30"/>
    </location>
</feature>
<accession>P61052</accession>
<sequence length="37" mass="4244">MAWRNPMNTLISLLLLTLIMLAGPAVIALWYFRGRQV</sequence>
<dbReference type="EMBL" id="BA000045">
    <property type="status" value="NOT_ANNOTATED_CDS"/>
    <property type="molecule type" value="Genomic_DNA"/>
</dbReference>
<dbReference type="SMR" id="P61052"/>
<dbReference type="InParanoid" id="P61052"/>
<dbReference type="Proteomes" id="UP000000557">
    <property type="component" value="Chromosome"/>
</dbReference>
<dbReference type="GO" id="GO:0009523">
    <property type="term" value="C:photosystem II"/>
    <property type="evidence" value="ECO:0007669"/>
    <property type="project" value="UniProtKB-KW"/>
</dbReference>
<dbReference type="GO" id="GO:0005886">
    <property type="term" value="C:plasma membrane"/>
    <property type="evidence" value="ECO:0007669"/>
    <property type="project" value="UniProtKB-SubCell"/>
</dbReference>
<dbReference type="GO" id="GO:0015979">
    <property type="term" value="P:photosynthesis"/>
    <property type="evidence" value="ECO:0007669"/>
    <property type="project" value="UniProtKB-KW"/>
</dbReference>
<dbReference type="InterPro" id="IPR010284">
    <property type="entry name" value="PSII_Ycf12_core-subunit"/>
</dbReference>
<dbReference type="NCBIfam" id="NF010239">
    <property type="entry name" value="PRK13686.1"/>
    <property type="match status" value="1"/>
</dbReference>
<dbReference type="Pfam" id="PF05969">
    <property type="entry name" value="PSII_Ycf12"/>
    <property type="match status" value="1"/>
</dbReference>